<keyword id="KW-0328">Glycosyltransferase</keyword>
<keyword id="KW-0808">Transferase</keyword>
<reference key="1">
    <citation type="submission" date="2009-07" db="EMBL/GenBank/DDBJ databases">
        <title>Complete sequence of Pectobacterium carotovorum subsp. carotovorum PC1.</title>
        <authorList>
            <consortium name="US DOE Joint Genome Institute"/>
            <person name="Lucas S."/>
            <person name="Copeland A."/>
            <person name="Lapidus A."/>
            <person name="Glavina del Rio T."/>
            <person name="Tice H."/>
            <person name="Bruce D."/>
            <person name="Goodwin L."/>
            <person name="Pitluck S."/>
            <person name="Munk A.C."/>
            <person name="Brettin T."/>
            <person name="Detter J.C."/>
            <person name="Han C."/>
            <person name="Tapia R."/>
            <person name="Larimer F."/>
            <person name="Land M."/>
            <person name="Hauser L."/>
            <person name="Kyrpides N."/>
            <person name="Mikhailova N."/>
            <person name="Balakrishnan V."/>
            <person name="Glasner J."/>
            <person name="Perna N.T."/>
        </authorList>
    </citation>
    <scope>NUCLEOTIDE SEQUENCE [LARGE SCALE GENOMIC DNA]</scope>
    <source>
        <strain>PC1</strain>
    </source>
</reference>
<protein>
    <recommendedName>
        <fullName evidence="1">UDP-N-acetyl-D-mannosaminuronic acid transferase</fullName>
        <shortName evidence="1">UDP-ManNAcA transferase</shortName>
        <ecNumber evidence="1">2.4.1.180</ecNumber>
    </recommendedName>
</protein>
<dbReference type="EC" id="2.4.1.180" evidence="1"/>
<dbReference type="EMBL" id="CP001657">
    <property type="protein sequence ID" value="ACT15015.1"/>
    <property type="molecule type" value="Genomic_DNA"/>
</dbReference>
<dbReference type="RefSeq" id="WP_015842095.1">
    <property type="nucleotide sequence ID" value="NC_012917.1"/>
</dbReference>
<dbReference type="SMR" id="C6DHE2"/>
<dbReference type="STRING" id="561230.PC1_4000"/>
<dbReference type="CAZy" id="GT26">
    <property type="family name" value="Glycosyltransferase Family 26"/>
</dbReference>
<dbReference type="KEGG" id="pct:PC1_4000"/>
<dbReference type="eggNOG" id="COG1922">
    <property type="taxonomic scope" value="Bacteria"/>
</dbReference>
<dbReference type="HOGENOM" id="CLU_063203_3_2_6"/>
<dbReference type="OrthoDB" id="9808602at2"/>
<dbReference type="UniPathway" id="UPA00566"/>
<dbReference type="Proteomes" id="UP000002736">
    <property type="component" value="Chromosome"/>
</dbReference>
<dbReference type="GO" id="GO:0047241">
    <property type="term" value="F:lipopolysaccharide N-acetylmannosaminouronosyltransferase activity"/>
    <property type="evidence" value="ECO:0007669"/>
    <property type="project" value="UniProtKB-UniRule"/>
</dbReference>
<dbReference type="GO" id="GO:0009246">
    <property type="term" value="P:enterobacterial common antigen biosynthetic process"/>
    <property type="evidence" value="ECO:0007669"/>
    <property type="project" value="UniProtKB-UniRule"/>
</dbReference>
<dbReference type="CDD" id="cd06533">
    <property type="entry name" value="Glyco_transf_WecG_TagA"/>
    <property type="match status" value="1"/>
</dbReference>
<dbReference type="HAMAP" id="MF_01001">
    <property type="entry name" value="WecG_RffM"/>
    <property type="match status" value="1"/>
</dbReference>
<dbReference type="InterPro" id="IPR023085">
    <property type="entry name" value="UDP-ManNAcA_Trfase_WecG"/>
</dbReference>
<dbReference type="InterPro" id="IPR004629">
    <property type="entry name" value="WecG_TagA_CpsF"/>
</dbReference>
<dbReference type="NCBIfam" id="NF002980">
    <property type="entry name" value="PRK03692.1"/>
    <property type="match status" value="1"/>
</dbReference>
<dbReference type="NCBIfam" id="TIGR00696">
    <property type="entry name" value="wecG_tagA_cpsF"/>
    <property type="match status" value="1"/>
</dbReference>
<dbReference type="PANTHER" id="PTHR34136">
    <property type="match status" value="1"/>
</dbReference>
<dbReference type="PANTHER" id="PTHR34136:SF1">
    <property type="entry name" value="UDP-N-ACETYL-D-MANNOSAMINURONIC ACID TRANSFERASE"/>
    <property type="match status" value="1"/>
</dbReference>
<dbReference type="Pfam" id="PF03808">
    <property type="entry name" value="Glyco_tran_WecG"/>
    <property type="match status" value="1"/>
</dbReference>
<feature type="chain" id="PRO_1000213138" description="UDP-N-acetyl-D-mannosaminuronic acid transferase">
    <location>
        <begin position="1"/>
        <end position="249"/>
    </location>
</feature>
<name>WECG_PECCP</name>
<accession>C6DHE2</accession>
<evidence type="ECO:0000255" key="1">
    <source>
        <dbReference type="HAMAP-Rule" id="MF_01001"/>
    </source>
</evidence>
<sequence>MTALKTTETIPLYTIRDLPIHGFRNMAQFVDYLFAGERVETGTLVAINAEKVLTAEKDVALRTLLDRAEYKYADGISIVRSIRRKYPQADVTRIAGADLWEALMERAGKEGTPVFLVGGKPDVLAQTEAKLRAQWNVNIVGSQDGYFAPEQRDALFERIRASGAQFVTVAMGSPRQEILMRDCRHHYPDALYMGVGGTYDVFTGHVKRAPLVWQNLGLEWLYRLLSQPSRIFRQFKLLKYVAYHYSGRL</sequence>
<proteinExistence type="inferred from homology"/>
<comment type="function">
    <text evidence="1">Catalyzes the synthesis of Und-PP-GlcNAc-ManNAcA (Lipid II), the second lipid-linked intermediate involved in enterobacterial common antigen (ECA) synthesis.</text>
</comment>
<comment type="catalytic activity">
    <reaction evidence="1">
        <text>UDP-N-acetyl-alpha-D-mannosaminouronate + N-acetyl-alpha-D-glucosaminyl-di-trans,octa-cis-undecaprenyl diphosphate = beta-D-ManNAcA-(1-&gt;4)-alpha-D-GlcNAc-di-trans,octa-cis-undecaprenyl diphosphate + UDP + H(+)</text>
        <dbReference type="Rhea" id="RHEA:28366"/>
        <dbReference type="ChEBI" id="CHEBI:15378"/>
        <dbReference type="ChEBI" id="CHEBI:58223"/>
        <dbReference type="ChEBI" id="CHEBI:61495"/>
        <dbReference type="ChEBI" id="CHEBI:62959"/>
        <dbReference type="ChEBI" id="CHEBI:70731"/>
        <dbReference type="EC" id="2.4.1.180"/>
    </reaction>
</comment>
<comment type="pathway">
    <text evidence="1">Bacterial outer membrane biogenesis; enterobacterial common antigen biosynthesis.</text>
</comment>
<comment type="similarity">
    <text evidence="1">Belongs to the glycosyltransferase 26 family.</text>
</comment>
<gene>
    <name evidence="1" type="primary">wecG</name>
    <name evidence="1" type="synonym">rffM</name>
    <name type="ordered locus">PC1_4000</name>
</gene>
<organism>
    <name type="scientific">Pectobacterium carotovorum subsp. carotovorum (strain PC1)</name>
    <dbReference type="NCBI Taxonomy" id="561230"/>
    <lineage>
        <taxon>Bacteria</taxon>
        <taxon>Pseudomonadati</taxon>
        <taxon>Pseudomonadota</taxon>
        <taxon>Gammaproteobacteria</taxon>
        <taxon>Enterobacterales</taxon>
        <taxon>Pectobacteriaceae</taxon>
        <taxon>Pectobacterium</taxon>
    </lineage>
</organism>